<evidence type="ECO:0000255" key="1">
    <source>
        <dbReference type="HAMAP-Rule" id="MF_00071"/>
    </source>
</evidence>
<accession>B1I6E0</accession>
<sequence length="602" mass="67547">MPVERDRIRNFCIIAHIDHGKSTLADRLLEYTGALVGRRMQEQVLDQMDLERERGITIKLQAVRLAYRARDGRDYQLNLIDTPGHVDFSYEVSRSLAACEGALLVVDASQGIEAQTLANVNLALDHNLTIIPIINKIDLASAEPDRVRRELEDVIGLDGADAVLASAKRGDGVEEILERIVRDVPPPGGDPGAPLRALIFDSHYDPYRGVVTYLRLMDGRLFPGGPVRMMATGREFEVSELGVFTPAPVTVNELRAGEVGFMAAGIKNVKDCRVGDTVTDARRPASSPLPGYRKAKPMVYCGLFPVDGAEFEKVRDALDRLSLNDASLVYEPETSTALGFGFRCGFLGLLHMEIIQERLEREYGLDLITTAPSVVYRVTRTNGAVLDIRNPSEMPPAGEIEKMEEPFVLTSLLLPQDYIGPVMELCQDRRGVFRNMEYISTHRVLITYEMPLAEIIYDFFDRLKSATRGYASMDYDLLGYRESKLVRVDILVAGERLDALSIIVHRDRAYHRSKIIVERLRDLIPRQLFEIVIQAAIGQRVIARESIRALRKAVLEKCYGGDVTRKRKLLEKQKEGKKRMKQVGHVQIPQEAFMSVLSIGQK</sequence>
<organism>
    <name type="scientific">Desulforudis audaxviator (strain MP104C)</name>
    <dbReference type="NCBI Taxonomy" id="477974"/>
    <lineage>
        <taxon>Bacteria</taxon>
        <taxon>Bacillati</taxon>
        <taxon>Bacillota</taxon>
        <taxon>Clostridia</taxon>
        <taxon>Thermoanaerobacterales</taxon>
        <taxon>Candidatus Desulforudaceae</taxon>
        <taxon>Candidatus Desulforudis</taxon>
    </lineage>
</organism>
<protein>
    <recommendedName>
        <fullName evidence="1">Elongation factor 4</fullName>
        <shortName evidence="1">EF-4</shortName>
        <ecNumber evidence="1">3.6.5.n1</ecNumber>
    </recommendedName>
    <alternativeName>
        <fullName evidence="1">Ribosomal back-translocase LepA</fullName>
    </alternativeName>
</protein>
<proteinExistence type="inferred from homology"/>
<dbReference type="EC" id="3.6.5.n1" evidence="1"/>
<dbReference type="EMBL" id="CP000860">
    <property type="protein sequence ID" value="ACA60551.1"/>
    <property type="molecule type" value="Genomic_DNA"/>
</dbReference>
<dbReference type="RefSeq" id="WP_012303126.1">
    <property type="nucleotide sequence ID" value="NC_010424.1"/>
</dbReference>
<dbReference type="SMR" id="B1I6E0"/>
<dbReference type="STRING" id="477974.Daud_2061"/>
<dbReference type="KEGG" id="dau:Daud_2061"/>
<dbReference type="eggNOG" id="COG0481">
    <property type="taxonomic scope" value="Bacteria"/>
</dbReference>
<dbReference type="HOGENOM" id="CLU_009995_3_3_9"/>
<dbReference type="OrthoDB" id="9804431at2"/>
<dbReference type="Proteomes" id="UP000008544">
    <property type="component" value="Chromosome"/>
</dbReference>
<dbReference type="GO" id="GO:0005886">
    <property type="term" value="C:plasma membrane"/>
    <property type="evidence" value="ECO:0007669"/>
    <property type="project" value="UniProtKB-SubCell"/>
</dbReference>
<dbReference type="GO" id="GO:0005525">
    <property type="term" value="F:GTP binding"/>
    <property type="evidence" value="ECO:0007669"/>
    <property type="project" value="UniProtKB-UniRule"/>
</dbReference>
<dbReference type="GO" id="GO:0003924">
    <property type="term" value="F:GTPase activity"/>
    <property type="evidence" value="ECO:0007669"/>
    <property type="project" value="UniProtKB-UniRule"/>
</dbReference>
<dbReference type="GO" id="GO:0043022">
    <property type="term" value="F:ribosome binding"/>
    <property type="evidence" value="ECO:0007669"/>
    <property type="project" value="UniProtKB-UniRule"/>
</dbReference>
<dbReference type="GO" id="GO:0003746">
    <property type="term" value="F:translation elongation factor activity"/>
    <property type="evidence" value="ECO:0007669"/>
    <property type="project" value="UniProtKB-UniRule"/>
</dbReference>
<dbReference type="GO" id="GO:0045727">
    <property type="term" value="P:positive regulation of translation"/>
    <property type="evidence" value="ECO:0007669"/>
    <property type="project" value="UniProtKB-UniRule"/>
</dbReference>
<dbReference type="CDD" id="cd03699">
    <property type="entry name" value="EF4_II"/>
    <property type="match status" value="1"/>
</dbReference>
<dbReference type="CDD" id="cd16260">
    <property type="entry name" value="EF4_III"/>
    <property type="match status" value="1"/>
</dbReference>
<dbReference type="CDD" id="cd01890">
    <property type="entry name" value="LepA"/>
    <property type="match status" value="1"/>
</dbReference>
<dbReference type="CDD" id="cd03709">
    <property type="entry name" value="lepA_C"/>
    <property type="match status" value="1"/>
</dbReference>
<dbReference type="FunFam" id="3.40.50.300:FF:000078">
    <property type="entry name" value="Elongation factor 4"/>
    <property type="match status" value="1"/>
</dbReference>
<dbReference type="FunFam" id="2.40.30.10:FF:000015">
    <property type="entry name" value="Translation factor GUF1, mitochondrial"/>
    <property type="match status" value="1"/>
</dbReference>
<dbReference type="FunFam" id="3.30.70.240:FF:000007">
    <property type="entry name" value="Translation factor GUF1, mitochondrial"/>
    <property type="match status" value="1"/>
</dbReference>
<dbReference type="FunFam" id="3.30.70.2570:FF:000001">
    <property type="entry name" value="Translation factor GUF1, mitochondrial"/>
    <property type="match status" value="1"/>
</dbReference>
<dbReference type="FunFam" id="3.30.70.870:FF:000004">
    <property type="entry name" value="Translation factor GUF1, mitochondrial"/>
    <property type="match status" value="1"/>
</dbReference>
<dbReference type="Gene3D" id="3.30.70.240">
    <property type="match status" value="1"/>
</dbReference>
<dbReference type="Gene3D" id="3.30.70.2570">
    <property type="entry name" value="Elongation factor 4, C-terminal domain"/>
    <property type="match status" value="1"/>
</dbReference>
<dbReference type="Gene3D" id="3.30.70.870">
    <property type="entry name" value="Elongation Factor G (Translational Gtpase), domain 3"/>
    <property type="match status" value="1"/>
</dbReference>
<dbReference type="Gene3D" id="3.40.50.300">
    <property type="entry name" value="P-loop containing nucleotide triphosphate hydrolases"/>
    <property type="match status" value="1"/>
</dbReference>
<dbReference type="Gene3D" id="2.40.30.10">
    <property type="entry name" value="Translation factors"/>
    <property type="match status" value="1"/>
</dbReference>
<dbReference type="HAMAP" id="MF_00071">
    <property type="entry name" value="LepA"/>
    <property type="match status" value="1"/>
</dbReference>
<dbReference type="InterPro" id="IPR006297">
    <property type="entry name" value="EF-4"/>
</dbReference>
<dbReference type="InterPro" id="IPR035647">
    <property type="entry name" value="EFG_III/V"/>
</dbReference>
<dbReference type="InterPro" id="IPR000640">
    <property type="entry name" value="EFG_V-like"/>
</dbReference>
<dbReference type="InterPro" id="IPR004161">
    <property type="entry name" value="EFTu-like_2"/>
</dbReference>
<dbReference type="InterPro" id="IPR031157">
    <property type="entry name" value="G_TR_CS"/>
</dbReference>
<dbReference type="InterPro" id="IPR038363">
    <property type="entry name" value="LepA_C_sf"/>
</dbReference>
<dbReference type="InterPro" id="IPR013842">
    <property type="entry name" value="LepA_CTD"/>
</dbReference>
<dbReference type="InterPro" id="IPR035654">
    <property type="entry name" value="LepA_IV"/>
</dbReference>
<dbReference type="InterPro" id="IPR027417">
    <property type="entry name" value="P-loop_NTPase"/>
</dbReference>
<dbReference type="InterPro" id="IPR005225">
    <property type="entry name" value="Small_GTP-bd"/>
</dbReference>
<dbReference type="InterPro" id="IPR000795">
    <property type="entry name" value="T_Tr_GTP-bd_dom"/>
</dbReference>
<dbReference type="InterPro" id="IPR009000">
    <property type="entry name" value="Transl_B-barrel_sf"/>
</dbReference>
<dbReference type="NCBIfam" id="TIGR01393">
    <property type="entry name" value="lepA"/>
    <property type="match status" value="1"/>
</dbReference>
<dbReference type="NCBIfam" id="TIGR00231">
    <property type="entry name" value="small_GTP"/>
    <property type="match status" value="1"/>
</dbReference>
<dbReference type="PANTHER" id="PTHR43512:SF4">
    <property type="entry name" value="TRANSLATION FACTOR GUF1 HOMOLOG, CHLOROPLASTIC"/>
    <property type="match status" value="1"/>
</dbReference>
<dbReference type="PANTHER" id="PTHR43512">
    <property type="entry name" value="TRANSLATION FACTOR GUF1-RELATED"/>
    <property type="match status" value="1"/>
</dbReference>
<dbReference type="Pfam" id="PF00679">
    <property type="entry name" value="EFG_C"/>
    <property type="match status" value="1"/>
</dbReference>
<dbReference type="Pfam" id="PF00009">
    <property type="entry name" value="GTP_EFTU"/>
    <property type="match status" value="1"/>
</dbReference>
<dbReference type="Pfam" id="PF03144">
    <property type="entry name" value="GTP_EFTU_D2"/>
    <property type="match status" value="1"/>
</dbReference>
<dbReference type="Pfam" id="PF06421">
    <property type="entry name" value="LepA_C"/>
    <property type="match status" value="1"/>
</dbReference>
<dbReference type="PRINTS" id="PR00315">
    <property type="entry name" value="ELONGATNFCT"/>
</dbReference>
<dbReference type="SUPFAM" id="SSF54980">
    <property type="entry name" value="EF-G C-terminal domain-like"/>
    <property type="match status" value="2"/>
</dbReference>
<dbReference type="SUPFAM" id="SSF52540">
    <property type="entry name" value="P-loop containing nucleoside triphosphate hydrolases"/>
    <property type="match status" value="1"/>
</dbReference>
<dbReference type="SUPFAM" id="SSF50447">
    <property type="entry name" value="Translation proteins"/>
    <property type="match status" value="1"/>
</dbReference>
<dbReference type="PROSITE" id="PS00301">
    <property type="entry name" value="G_TR_1"/>
    <property type="match status" value="1"/>
</dbReference>
<dbReference type="PROSITE" id="PS51722">
    <property type="entry name" value="G_TR_2"/>
    <property type="match status" value="1"/>
</dbReference>
<keyword id="KW-1003">Cell membrane</keyword>
<keyword id="KW-0342">GTP-binding</keyword>
<keyword id="KW-0378">Hydrolase</keyword>
<keyword id="KW-0472">Membrane</keyword>
<keyword id="KW-0547">Nucleotide-binding</keyword>
<keyword id="KW-0648">Protein biosynthesis</keyword>
<keyword id="KW-1185">Reference proteome</keyword>
<name>LEPA_DESAP</name>
<gene>
    <name evidence="1" type="primary">lepA</name>
    <name type="ordered locus">Daud_2061</name>
</gene>
<feature type="chain" id="PRO_1000092393" description="Elongation factor 4">
    <location>
        <begin position="1"/>
        <end position="602"/>
    </location>
</feature>
<feature type="domain" description="tr-type G">
    <location>
        <begin position="6"/>
        <end position="188"/>
    </location>
</feature>
<feature type="binding site" evidence="1">
    <location>
        <begin position="18"/>
        <end position="23"/>
    </location>
    <ligand>
        <name>GTP</name>
        <dbReference type="ChEBI" id="CHEBI:37565"/>
    </ligand>
</feature>
<feature type="binding site" evidence="1">
    <location>
        <begin position="135"/>
        <end position="138"/>
    </location>
    <ligand>
        <name>GTP</name>
        <dbReference type="ChEBI" id="CHEBI:37565"/>
    </ligand>
</feature>
<comment type="function">
    <text evidence="1">Required for accurate and efficient protein synthesis under certain stress conditions. May act as a fidelity factor of the translation reaction, by catalyzing a one-codon backward translocation of tRNAs on improperly translocated ribosomes. Back-translocation proceeds from a post-translocation (POST) complex to a pre-translocation (PRE) complex, thus giving elongation factor G a second chance to translocate the tRNAs correctly. Binds to ribosomes in a GTP-dependent manner.</text>
</comment>
<comment type="catalytic activity">
    <reaction evidence="1">
        <text>GTP + H2O = GDP + phosphate + H(+)</text>
        <dbReference type="Rhea" id="RHEA:19669"/>
        <dbReference type="ChEBI" id="CHEBI:15377"/>
        <dbReference type="ChEBI" id="CHEBI:15378"/>
        <dbReference type="ChEBI" id="CHEBI:37565"/>
        <dbReference type="ChEBI" id="CHEBI:43474"/>
        <dbReference type="ChEBI" id="CHEBI:58189"/>
        <dbReference type="EC" id="3.6.5.n1"/>
    </reaction>
</comment>
<comment type="subcellular location">
    <subcellularLocation>
        <location evidence="1">Cell membrane</location>
        <topology evidence="1">Peripheral membrane protein</topology>
        <orientation evidence="1">Cytoplasmic side</orientation>
    </subcellularLocation>
</comment>
<comment type="similarity">
    <text evidence="1">Belongs to the TRAFAC class translation factor GTPase superfamily. Classic translation factor GTPase family. LepA subfamily.</text>
</comment>
<reference key="1">
    <citation type="submission" date="2007-10" db="EMBL/GenBank/DDBJ databases">
        <title>Complete sequence of chromosome of Desulforudis audaxviator MP104C.</title>
        <authorList>
            <person name="Copeland A."/>
            <person name="Lucas S."/>
            <person name="Lapidus A."/>
            <person name="Barry K."/>
            <person name="Glavina del Rio T."/>
            <person name="Dalin E."/>
            <person name="Tice H."/>
            <person name="Bruce D."/>
            <person name="Pitluck S."/>
            <person name="Lowry S.R."/>
            <person name="Larimer F."/>
            <person name="Land M.L."/>
            <person name="Hauser L."/>
            <person name="Kyrpides N."/>
            <person name="Ivanova N.N."/>
            <person name="Richardson P."/>
        </authorList>
    </citation>
    <scope>NUCLEOTIDE SEQUENCE [LARGE SCALE GENOMIC DNA]</scope>
    <source>
        <strain>MP104C</strain>
    </source>
</reference>